<protein>
    <recommendedName>
        <fullName evidence="1">ATP synthase subunit b</fullName>
    </recommendedName>
    <alternativeName>
        <fullName evidence="1">ATP synthase F(0) sector subunit b</fullName>
    </alternativeName>
    <alternativeName>
        <fullName evidence="1">ATPase subunit I</fullName>
    </alternativeName>
    <alternativeName>
        <fullName evidence="1">F-type ATPase subunit b</fullName>
        <shortName evidence="1">F-ATPase subunit b</shortName>
    </alternativeName>
</protein>
<comment type="function">
    <text evidence="1">F(1)F(0) ATP synthase produces ATP from ADP in the presence of a proton or sodium gradient. F-type ATPases consist of two structural domains, F(1) containing the extramembraneous catalytic core and F(0) containing the membrane proton channel, linked together by a central stalk and a peripheral stalk. During catalysis, ATP synthesis in the catalytic domain of F(1) is coupled via a rotary mechanism of the central stalk subunits to proton translocation.</text>
</comment>
<comment type="function">
    <text evidence="1">Component of the F(0) channel, it forms part of the peripheral stalk, linking F(1) to F(0).</text>
</comment>
<comment type="subunit">
    <text evidence="1">F-type ATPases have 2 components, F(1) - the catalytic core - and F(0) - the membrane proton channel. F(1) has five subunits: alpha(3), beta(3), gamma(1), delta(1), epsilon(1). F(0) has three main subunits: a(1), b(2) and c(10-14). The alpha and beta chains form an alternating ring which encloses part of the gamma chain. F(1) is attached to F(0) by a central stalk formed by the gamma and epsilon chains, while a peripheral stalk is formed by the delta and b chains.</text>
</comment>
<comment type="subcellular location">
    <subcellularLocation>
        <location evidence="1">Cell membrane</location>
        <topology evidence="1">Single-pass membrane protein</topology>
    </subcellularLocation>
</comment>
<comment type="similarity">
    <text evidence="1">Belongs to the ATPase B chain family.</text>
</comment>
<dbReference type="EMBL" id="CP001177">
    <property type="protein sequence ID" value="ACJ78035.1"/>
    <property type="molecule type" value="Genomic_DNA"/>
</dbReference>
<dbReference type="SMR" id="B7HY69"/>
<dbReference type="KEGG" id="bcr:BCAH187_A5487"/>
<dbReference type="HOGENOM" id="CLU_079215_4_2_9"/>
<dbReference type="Proteomes" id="UP000002214">
    <property type="component" value="Chromosome"/>
</dbReference>
<dbReference type="GO" id="GO:0005886">
    <property type="term" value="C:plasma membrane"/>
    <property type="evidence" value="ECO:0007669"/>
    <property type="project" value="UniProtKB-SubCell"/>
</dbReference>
<dbReference type="GO" id="GO:0045259">
    <property type="term" value="C:proton-transporting ATP synthase complex"/>
    <property type="evidence" value="ECO:0007669"/>
    <property type="project" value="UniProtKB-KW"/>
</dbReference>
<dbReference type="GO" id="GO:0046933">
    <property type="term" value="F:proton-transporting ATP synthase activity, rotational mechanism"/>
    <property type="evidence" value="ECO:0007669"/>
    <property type="project" value="UniProtKB-UniRule"/>
</dbReference>
<dbReference type="GO" id="GO:0046961">
    <property type="term" value="F:proton-transporting ATPase activity, rotational mechanism"/>
    <property type="evidence" value="ECO:0007669"/>
    <property type="project" value="TreeGrafter"/>
</dbReference>
<dbReference type="CDD" id="cd06503">
    <property type="entry name" value="ATP-synt_Fo_b"/>
    <property type="match status" value="1"/>
</dbReference>
<dbReference type="Gene3D" id="6.10.250.1580">
    <property type="match status" value="1"/>
</dbReference>
<dbReference type="HAMAP" id="MF_01398">
    <property type="entry name" value="ATP_synth_b_bprime"/>
    <property type="match status" value="1"/>
</dbReference>
<dbReference type="InterPro" id="IPR028987">
    <property type="entry name" value="ATP_synth_B-like_membr_sf"/>
</dbReference>
<dbReference type="InterPro" id="IPR002146">
    <property type="entry name" value="ATP_synth_b/b'su_bac/chlpt"/>
</dbReference>
<dbReference type="InterPro" id="IPR005864">
    <property type="entry name" value="ATP_synth_F0_bsu_bac"/>
</dbReference>
<dbReference type="InterPro" id="IPR050059">
    <property type="entry name" value="ATP_synthase_B_chain"/>
</dbReference>
<dbReference type="NCBIfam" id="TIGR01144">
    <property type="entry name" value="ATP_synt_b"/>
    <property type="match status" value="1"/>
</dbReference>
<dbReference type="PANTHER" id="PTHR33445:SF1">
    <property type="entry name" value="ATP SYNTHASE SUBUNIT B"/>
    <property type="match status" value="1"/>
</dbReference>
<dbReference type="PANTHER" id="PTHR33445">
    <property type="entry name" value="ATP SYNTHASE SUBUNIT B', CHLOROPLASTIC"/>
    <property type="match status" value="1"/>
</dbReference>
<dbReference type="Pfam" id="PF00430">
    <property type="entry name" value="ATP-synt_B"/>
    <property type="match status" value="1"/>
</dbReference>
<dbReference type="SUPFAM" id="SSF81573">
    <property type="entry name" value="F1F0 ATP synthase subunit B, membrane domain"/>
    <property type="match status" value="1"/>
</dbReference>
<reference key="1">
    <citation type="submission" date="2008-10" db="EMBL/GenBank/DDBJ databases">
        <title>Genome sequence of Bacillus cereus AH187.</title>
        <authorList>
            <person name="Dodson R.J."/>
            <person name="Durkin A.S."/>
            <person name="Rosovitz M.J."/>
            <person name="Rasko D.A."/>
            <person name="Kolsto A.B."/>
            <person name="Okstad O.A."/>
            <person name="Ravel J."/>
            <person name="Sutton G."/>
        </authorList>
    </citation>
    <scope>NUCLEOTIDE SEQUENCE [LARGE SCALE GENOMIC DNA]</scope>
    <source>
        <strain>AH187</strain>
    </source>
</reference>
<accession>B7HY69</accession>
<feature type="chain" id="PRO_0000368323" description="ATP synthase subunit b">
    <location>
        <begin position="1"/>
        <end position="168"/>
    </location>
</feature>
<feature type="transmembrane region" description="Helical" evidence="1">
    <location>
        <begin position="9"/>
        <end position="29"/>
    </location>
</feature>
<keyword id="KW-0066">ATP synthesis</keyword>
<keyword id="KW-1003">Cell membrane</keyword>
<keyword id="KW-0138">CF(0)</keyword>
<keyword id="KW-0375">Hydrogen ion transport</keyword>
<keyword id="KW-0406">Ion transport</keyword>
<keyword id="KW-0472">Membrane</keyword>
<keyword id="KW-0812">Transmembrane</keyword>
<keyword id="KW-1133">Transmembrane helix</keyword>
<keyword id="KW-0813">Transport</keyword>
<name>ATPF_BACC7</name>
<gene>
    <name evidence="1" type="primary">atpF</name>
    <name type="ordered locus">BCAH187_A5487</name>
</gene>
<proteinExistence type="inferred from homology"/>
<sequence length="168" mass="18932">MPTLLLGAAIPFGTIAYTLFIFLLLLVMLRKFAWGPLMGIMKEREEHVTNEIDAAERSNAEAKKLVEEQREMLKQSRVEAQELIERAKKQAVDQKDAIVAAAKEEAESIKASAVQEIQREKEQAIAALQEQVASLSVQIASKVIEKELKEEDQVKLIRDYIKEVGEAR</sequence>
<organism>
    <name type="scientific">Bacillus cereus (strain AH187)</name>
    <dbReference type="NCBI Taxonomy" id="405534"/>
    <lineage>
        <taxon>Bacteria</taxon>
        <taxon>Bacillati</taxon>
        <taxon>Bacillota</taxon>
        <taxon>Bacilli</taxon>
        <taxon>Bacillales</taxon>
        <taxon>Bacillaceae</taxon>
        <taxon>Bacillus</taxon>
        <taxon>Bacillus cereus group</taxon>
    </lineage>
</organism>
<evidence type="ECO:0000255" key="1">
    <source>
        <dbReference type="HAMAP-Rule" id="MF_01398"/>
    </source>
</evidence>